<comment type="function">
    <text evidence="5">Secreted proximal epididymal protein required for post-testicular sperm maturation and male fertility. May be involved in sperm adhesion to the egg zona pellucida. Does not have ribonuclease activity.</text>
</comment>
<comment type="subcellular location">
    <subcellularLocation>
        <location evidence="1">Secreted</location>
    </subcellularLocation>
</comment>
<comment type="tissue specificity">
    <text evidence="3 4 5">Male-specific expression in proximal caput of the epididymis (at protein level).</text>
</comment>
<comment type="developmental stage">
    <text evidence="3">Expressed in mature epididymis.</text>
</comment>
<comment type="PTM">
    <text evidence="1">The N-terminus is blocked. Glycosylated (By similarity).</text>
</comment>
<comment type="disruption phenotype">
    <text evidence="5">Mice are viable, anatomically normal and reach adulthood but display impaired fertility consequent to an inability of the spermatozoa to ascend the uterotubal junction (UTJ) canal of the female reproductive tract and gain the site of fertilization. Spermatozoa fail to establish a strong association with either epididymal epithelial cells, the zona pellucida of oocytes or oviductal epithelial cells, yet they are capable of fertilizing eggs in vitro.</text>
</comment>
<comment type="similarity">
    <text evidence="6">Belongs to the pancreatic ribonuclease family.</text>
</comment>
<comment type="sequence caution" evidence="6">
    <conflict type="erroneous initiation">
        <sequence resource="EMBL-CDS" id="AAP43947"/>
    </conflict>
    <text>Extended N-terminus.</text>
</comment>
<organism>
    <name type="scientific">Mus musculus</name>
    <name type="common">Mouse</name>
    <dbReference type="NCBI Taxonomy" id="10090"/>
    <lineage>
        <taxon>Eukaryota</taxon>
        <taxon>Metazoa</taxon>
        <taxon>Chordata</taxon>
        <taxon>Craniata</taxon>
        <taxon>Vertebrata</taxon>
        <taxon>Euteleostomi</taxon>
        <taxon>Mammalia</taxon>
        <taxon>Eutheria</taxon>
        <taxon>Euarchontoglires</taxon>
        <taxon>Glires</taxon>
        <taxon>Rodentia</taxon>
        <taxon>Myomorpha</taxon>
        <taxon>Muroidea</taxon>
        <taxon>Muridae</taxon>
        <taxon>Murinae</taxon>
        <taxon>Mus</taxon>
        <taxon>Mus</taxon>
    </lineage>
</organism>
<proteinExistence type="evidence at protein level"/>
<accession>Q9D5A9</accession>
<accession>Q6XL64</accession>
<sequence>MKVTLVHLLFMMLLLLLGLGLGLGLGLHMAAAVLEDQPLNEFWPSDSQNTEEGEGIWTTEGLALGYKEMAQPVWPEEAVLSEDEVGGSRMLRAEPRFQSKQDYLKFDLSVRDCNTMMAHKIKEPNQSCINQYTFIHEDPNTVKAVCNGSLVDCDLQGGKCYKSPRPFDLTLCKLAKPGQVTPNCHYLTYITEKSIFMTCNDKRQLETK</sequence>
<feature type="signal peptide" evidence="2">
    <location>
        <begin position="1"/>
        <end position="24"/>
    </location>
</feature>
<feature type="chain" id="PRO_0000045964" description="Inactive ribonuclease-like protein 10">
    <location>
        <begin position="25"/>
        <end position="208"/>
    </location>
</feature>
<feature type="glycosylation site" description="N-linked (GlcNAc...) asparagine" evidence="2">
    <location>
        <position position="125"/>
    </location>
</feature>
<feature type="glycosylation site" description="N-linked (GlcNAc...) asparagine" evidence="2">
    <location>
        <position position="147"/>
    </location>
</feature>
<feature type="sequence conflict" description="In Ref. 1; AAP43947." evidence="6" ref="1">
    <original>Q</original>
    <variation>H</variation>
    <location>
        <position position="37"/>
    </location>
</feature>
<feature type="sequence conflict" description="In Ref. 1; AAP43947." evidence="6" ref="1">
    <original>A</original>
    <variation>T</variation>
    <location>
        <position position="63"/>
    </location>
</feature>
<feature type="sequence conflict" description="In Ref. 1; AAP43947." evidence="6" ref="1">
    <original>C</original>
    <variation>S</variation>
    <location>
        <position position="128"/>
    </location>
</feature>
<feature type="sequence conflict" description="In Ref. 1; AAP43947." evidence="6" ref="1">
    <original>Q</original>
    <variation>K</variation>
    <location>
        <position position="156"/>
    </location>
</feature>
<feature type="sequence conflict" description="In Ref. 1; AAP43947." evidence="6" ref="1">
    <original>S</original>
    <variation>V</variation>
    <location>
        <position position="194"/>
    </location>
</feature>
<feature type="sequence conflict" description="In Ref. 1; AAP43947." evidence="6" ref="1">
    <original>R</original>
    <variation>K</variation>
    <location>
        <position position="203"/>
    </location>
</feature>
<protein>
    <recommendedName>
        <fullName>Inactive ribonuclease-like protein 10</fullName>
    </recommendedName>
    <alternativeName>
        <fullName>Protein Train A</fullName>
    </alternativeName>
</protein>
<evidence type="ECO:0000250" key="1"/>
<evidence type="ECO:0000255" key="2"/>
<evidence type="ECO:0000269" key="3">
    <source>
    </source>
</evidence>
<evidence type="ECO:0000269" key="4">
    <source>
    </source>
</evidence>
<evidence type="ECO:0000269" key="5">
    <source>
    </source>
</evidence>
<evidence type="ECO:0000305" key="6"/>
<reference key="1">
    <citation type="journal article" date="2003" name="Mol. Endocrinol.">
        <title>Discovery in silico and characterization in vitro of novel genes exclusively expressed in the mouse epididymis.</title>
        <authorList>
            <person name="Penttinen J."/>
            <person name="Pujianto D.A."/>
            <person name="Sipilae P."/>
            <person name="Huhtaniemi I."/>
            <person name="Poutanen M."/>
        </authorList>
    </citation>
    <scope>NUCLEOTIDE SEQUENCE [MRNA]</scope>
    <scope>DEVELOPMENTAL STAGE</scope>
    <scope>TISSUE SPECIFICITY</scope>
    <source>
        <strain>FVB/N</strain>
        <tissue>Epididymis</tissue>
    </source>
</reference>
<reference key="2">
    <citation type="journal article" date="2005" name="Science">
        <title>The transcriptional landscape of the mammalian genome.</title>
        <authorList>
            <person name="Carninci P."/>
            <person name="Kasukawa T."/>
            <person name="Katayama S."/>
            <person name="Gough J."/>
            <person name="Frith M.C."/>
            <person name="Maeda N."/>
            <person name="Oyama R."/>
            <person name="Ravasi T."/>
            <person name="Lenhard B."/>
            <person name="Wells C."/>
            <person name="Kodzius R."/>
            <person name="Shimokawa K."/>
            <person name="Bajic V.B."/>
            <person name="Brenner S.E."/>
            <person name="Batalov S."/>
            <person name="Forrest A.R."/>
            <person name="Zavolan M."/>
            <person name="Davis M.J."/>
            <person name="Wilming L.G."/>
            <person name="Aidinis V."/>
            <person name="Allen J.E."/>
            <person name="Ambesi-Impiombato A."/>
            <person name="Apweiler R."/>
            <person name="Aturaliya R.N."/>
            <person name="Bailey T.L."/>
            <person name="Bansal M."/>
            <person name="Baxter L."/>
            <person name="Beisel K.W."/>
            <person name="Bersano T."/>
            <person name="Bono H."/>
            <person name="Chalk A.M."/>
            <person name="Chiu K.P."/>
            <person name="Choudhary V."/>
            <person name="Christoffels A."/>
            <person name="Clutterbuck D.R."/>
            <person name="Crowe M.L."/>
            <person name="Dalla E."/>
            <person name="Dalrymple B.P."/>
            <person name="de Bono B."/>
            <person name="Della Gatta G."/>
            <person name="di Bernardo D."/>
            <person name="Down T."/>
            <person name="Engstrom P."/>
            <person name="Fagiolini M."/>
            <person name="Faulkner G."/>
            <person name="Fletcher C.F."/>
            <person name="Fukushima T."/>
            <person name="Furuno M."/>
            <person name="Futaki S."/>
            <person name="Gariboldi M."/>
            <person name="Georgii-Hemming P."/>
            <person name="Gingeras T.R."/>
            <person name="Gojobori T."/>
            <person name="Green R.E."/>
            <person name="Gustincich S."/>
            <person name="Harbers M."/>
            <person name="Hayashi Y."/>
            <person name="Hensch T.K."/>
            <person name="Hirokawa N."/>
            <person name="Hill D."/>
            <person name="Huminiecki L."/>
            <person name="Iacono M."/>
            <person name="Ikeo K."/>
            <person name="Iwama A."/>
            <person name="Ishikawa T."/>
            <person name="Jakt M."/>
            <person name="Kanapin A."/>
            <person name="Katoh M."/>
            <person name="Kawasawa Y."/>
            <person name="Kelso J."/>
            <person name="Kitamura H."/>
            <person name="Kitano H."/>
            <person name="Kollias G."/>
            <person name="Krishnan S.P."/>
            <person name="Kruger A."/>
            <person name="Kummerfeld S.K."/>
            <person name="Kurochkin I.V."/>
            <person name="Lareau L.F."/>
            <person name="Lazarevic D."/>
            <person name="Lipovich L."/>
            <person name="Liu J."/>
            <person name="Liuni S."/>
            <person name="McWilliam S."/>
            <person name="Madan Babu M."/>
            <person name="Madera M."/>
            <person name="Marchionni L."/>
            <person name="Matsuda H."/>
            <person name="Matsuzawa S."/>
            <person name="Miki H."/>
            <person name="Mignone F."/>
            <person name="Miyake S."/>
            <person name="Morris K."/>
            <person name="Mottagui-Tabar S."/>
            <person name="Mulder N."/>
            <person name="Nakano N."/>
            <person name="Nakauchi H."/>
            <person name="Ng P."/>
            <person name="Nilsson R."/>
            <person name="Nishiguchi S."/>
            <person name="Nishikawa S."/>
            <person name="Nori F."/>
            <person name="Ohara O."/>
            <person name="Okazaki Y."/>
            <person name="Orlando V."/>
            <person name="Pang K.C."/>
            <person name="Pavan W.J."/>
            <person name="Pavesi G."/>
            <person name="Pesole G."/>
            <person name="Petrovsky N."/>
            <person name="Piazza S."/>
            <person name="Reed J."/>
            <person name="Reid J.F."/>
            <person name="Ring B.Z."/>
            <person name="Ringwald M."/>
            <person name="Rost B."/>
            <person name="Ruan Y."/>
            <person name="Salzberg S.L."/>
            <person name="Sandelin A."/>
            <person name="Schneider C."/>
            <person name="Schoenbach C."/>
            <person name="Sekiguchi K."/>
            <person name="Semple C.A."/>
            <person name="Seno S."/>
            <person name="Sessa L."/>
            <person name="Sheng Y."/>
            <person name="Shibata Y."/>
            <person name="Shimada H."/>
            <person name="Shimada K."/>
            <person name="Silva D."/>
            <person name="Sinclair B."/>
            <person name="Sperling S."/>
            <person name="Stupka E."/>
            <person name="Sugiura K."/>
            <person name="Sultana R."/>
            <person name="Takenaka Y."/>
            <person name="Taki K."/>
            <person name="Tammoja K."/>
            <person name="Tan S.L."/>
            <person name="Tang S."/>
            <person name="Taylor M.S."/>
            <person name="Tegner J."/>
            <person name="Teichmann S.A."/>
            <person name="Ueda H.R."/>
            <person name="van Nimwegen E."/>
            <person name="Verardo R."/>
            <person name="Wei C.L."/>
            <person name="Yagi K."/>
            <person name="Yamanishi H."/>
            <person name="Zabarovsky E."/>
            <person name="Zhu S."/>
            <person name="Zimmer A."/>
            <person name="Hide W."/>
            <person name="Bult C."/>
            <person name="Grimmond S.M."/>
            <person name="Teasdale R.D."/>
            <person name="Liu E.T."/>
            <person name="Brusic V."/>
            <person name="Quackenbush J."/>
            <person name="Wahlestedt C."/>
            <person name="Mattick J.S."/>
            <person name="Hume D.A."/>
            <person name="Kai C."/>
            <person name="Sasaki D."/>
            <person name="Tomaru Y."/>
            <person name="Fukuda S."/>
            <person name="Kanamori-Katayama M."/>
            <person name="Suzuki M."/>
            <person name="Aoki J."/>
            <person name="Arakawa T."/>
            <person name="Iida J."/>
            <person name="Imamura K."/>
            <person name="Itoh M."/>
            <person name="Kato T."/>
            <person name="Kawaji H."/>
            <person name="Kawagashira N."/>
            <person name="Kawashima T."/>
            <person name="Kojima M."/>
            <person name="Kondo S."/>
            <person name="Konno H."/>
            <person name="Nakano K."/>
            <person name="Ninomiya N."/>
            <person name="Nishio T."/>
            <person name="Okada M."/>
            <person name="Plessy C."/>
            <person name="Shibata K."/>
            <person name="Shiraki T."/>
            <person name="Suzuki S."/>
            <person name="Tagami M."/>
            <person name="Waki K."/>
            <person name="Watahiki A."/>
            <person name="Okamura-Oho Y."/>
            <person name="Suzuki H."/>
            <person name="Kawai J."/>
            <person name="Hayashizaki Y."/>
        </authorList>
    </citation>
    <scope>NUCLEOTIDE SEQUENCE [LARGE SCALE MRNA]</scope>
    <source>
        <strain>C57BL/6J</strain>
        <tissue>Testis</tissue>
    </source>
</reference>
<reference key="3">
    <citation type="journal article" date="2004" name="Biol. Reprod.">
        <title>Identification of a member of a new RNase A family specifically secreted by epididymal caput epithelium.</title>
        <authorList>
            <person name="Castella S."/>
            <person name="Fouchecourt S."/>
            <person name="Teixeira-Gomes A.P."/>
            <person name="Vinh J."/>
            <person name="Belghazi M."/>
            <person name="Dacheux F."/>
            <person name="Dacheux J.-L."/>
        </authorList>
    </citation>
    <scope>TISSUE SPECIFICITY</scope>
</reference>
<reference key="4">
    <citation type="journal article" date="2012" name="FASEB J.">
        <title>Epididymal protein Rnase10 is required for post-testicular sperm maturation and male fertility.</title>
        <authorList>
            <person name="Krutskikh A."/>
            <person name="Poliandri A."/>
            <person name="Cabrera-Sharp V."/>
            <person name="Dacheux J.L."/>
            <person name="Poutanen M."/>
            <person name="Huhtaniemi I."/>
        </authorList>
    </citation>
    <scope>FUNCTION</scope>
    <scope>DISRUPTION PHENOTYPE</scope>
    <scope>TISSUE SPECIFICITY</scope>
</reference>
<gene>
    <name type="primary">Rnase10</name>
</gene>
<dbReference type="EMBL" id="AY226990">
    <property type="protein sequence ID" value="AAP43947.1"/>
    <property type="status" value="ALT_INIT"/>
    <property type="molecule type" value="mRNA"/>
</dbReference>
<dbReference type="EMBL" id="AK015573">
    <property type="protein sequence ID" value="BAB29898.1"/>
    <property type="molecule type" value="mRNA"/>
</dbReference>
<dbReference type="CCDS" id="CCDS49480.1"/>
<dbReference type="RefSeq" id="NP_001156335.1">
    <property type="nucleotide sequence ID" value="NM_001162863.1"/>
</dbReference>
<dbReference type="SMR" id="Q9D5A9"/>
<dbReference type="FunCoup" id="Q9D5A9">
    <property type="interactions" value="2"/>
</dbReference>
<dbReference type="STRING" id="10090.ENSMUSP00000022424"/>
<dbReference type="GlyCosmos" id="Q9D5A9">
    <property type="glycosylation" value="2 sites, No reported glycans"/>
</dbReference>
<dbReference type="GlyGen" id="Q9D5A9">
    <property type="glycosylation" value="2 sites"/>
</dbReference>
<dbReference type="PaxDb" id="10090-ENSMUSP00000022424"/>
<dbReference type="ProteomicsDB" id="260824"/>
<dbReference type="DNASU" id="75019"/>
<dbReference type="GeneID" id="75019"/>
<dbReference type="KEGG" id="mmu:75019"/>
<dbReference type="AGR" id="MGI:1922269"/>
<dbReference type="CTD" id="338879"/>
<dbReference type="MGI" id="MGI:1922269">
    <property type="gene designation" value="Rnase10"/>
</dbReference>
<dbReference type="eggNOG" id="ENOG502RPGF">
    <property type="taxonomic scope" value="Eukaryota"/>
</dbReference>
<dbReference type="InParanoid" id="Q9D5A9"/>
<dbReference type="OrthoDB" id="9830114at2759"/>
<dbReference type="PhylomeDB" id="Q9D5A9"/>
<dbReference type="BioGRID-ORCS" id="75019">
    <property type="hits" value="3 hits in 78 CRISPR screens"/>
</dbReference>
<dbReference type="ChiTaRS" id="Rnase10">
    <property type="organism name" value="mouse"/>
</dbReference>
<dbReference type="PRO" id="PR:Q9D5A9"/>
<dbReference type="Proteomes" id="UP000000589">
    <property type="component" value="Unplaced"/>
</dbReference>
<dbReference type="RNAct" id="Q9D5A9">
    <property type="molecule type" value="protein"/>
</dbReference>
<dbReference type="GO" id="GO:0005576">
    <property type="term" value="C:extracellular region"/>
    <property type="evidence" value="ECO:0007669"/>
    <property type="project" value="UniProtKB-SubCell"/>
</dbReference>
<dbReference type="GO" id="GO:0003676">
    <property type="term" value="F:nucleic acid binding"/>
    <property type="evidence" value="ECO:0007669"/>
    <property type="project" value="InterPro"/>
</dbReference>
<dbReference type="GO" id="GO:0003382">
    <property type="term" value="P:epithelial cell morphogenesis"/>
    <property type="evidence" value="ECO:0000316"/>
    <property type="project" value="MGI"/>
</dbReference>
<dbReference type="GO" id="GO:0034113">
    <property type="term" value="P:heterotypic cell-cell adhesion"/>
    <property type="evidence" value="ECO:0000315"/>
    <property type="project" value="UniProtKB"/>
</dbReference>
<dbReference type="GO" id="GO:0008584">
    <property type="term" value="P:male gonad development"/>
    <property type="evidence" value="ECO:0000316"/>
    <property type="project" value="MGI"/>
</dbReference>
<dbReference type="GO" id="GO:0022409">
    <property type="term" value="P:positive regulation of cell-cell adhesion"/>
    <property type="evidence" value="ECO:0000315"/>
    <property type="project" value="UniProtKB"/>
</dbReference>
<dbReference type="GO" id="GO:1902093">
    <property type="term" value="P:positive regulation of flagellated sperm motility"/>
    <property type="evidence" value="ECO:0000315"/>
    <property type="project" value="UniProtKB"/>
</dbReference>
<dbReference type="GO" id="GO:0080154">
    <property type="term" value="P:regulation of fertilization"/>
    <property type="evidence" value="ECO:0000315"/>
    <property type="project" value="UniProtKB"/>
</dbReference>
<dbReference type="GO" id="GO:0072520">
    <property type="term" value="P:seminiferous tubule development"/>
    <property type="evidence" value="ECO:0000316"/>
    <property type="project" value="MGI"/>
</dbReference>
<dbReference type="GO" id="GO:0007338">
    <property type="term" value="P:single fertilization"/>
    <property type="evidence" value="ECO:0000316"/>
    <property type="project" value="MGI"/>
</dbReference>
<dbReference type="CDD" id="cd00163">
    <property type="entry name" value="RNase_A"/>
    <property type="match status" value="1"/>
</dbReference>
<dbReference type="FunFam" id="3.10.130.10:FF:000002">
    <property type="entry name" value="Inactive ribonuclease-like protein 10"/>
    <property type="match status" value="1"/>
</dbReference>
<dbReference type="Gene3D" id="3.10.130.10">
    <property type="entry name" value="Ribonuclease A-like domain"/>
    <property type="match status" value="1"/>
</dbReference>
<dbReference type="InterPro" id="IPR001427">
    <property type="entry name" value="RNaseA"/>
</dbReference>
<dbReference type="InterPro" id="IPR036816">
    <property type="entry name" value="RNaseA-like_dom_sf"/>
</dbReference>
<dbReference type="InterPro" id="IPR023412">
    <property type="entry name" value="RNaseA_domain"/>
</dbReference>
<dbReference type="PANTHER" id="PTHR11437:SF63">
    <property type="entry name" value="INACTIVE RIBONUCLEASE-LIKE PROTEIN 10"/>
    <property type="match status" value="1"/>
</dbReference>
<dbReference type="PANTHER" id="PTHR11437">
    <property type="entry name" value="RIBONUCLEASE"/>
    <property type="match status" value="1"/>
</dbReference>
<dbReference type="Pfam" id="PF00074">
    <property type="entry name" value="RnaseA"/>
    <property type="match status" value="1"/>
</dbReference>
<dbReference type="PRINTS" id="PR00794">
    <property type="entry name" value="RIBONUCLEASE"/>
</dbReference>
<dbReference type="SMART" id="SM00092">
    <property type="entry name" value="RNAse_Pc"/>
    <property type="match status" value="1"/>
</dbReference>
<dbReference type="SUPFAM" id="SSF54076">
    <property type="entry name" value="RNase A-like"/>
    <property type="match status" value="1"/>
</dbReference>
<keyword id="KW-0130">Cell adhesion</keyword>
<keyword id="KW-0278">Fertilization</keyword>
<keyword id="KW-0325">Glycoprotein</keyword>
<keyword id="KW-1185">Reference proteome</keyword>
<keyword id="KW-0964">Secreted</keyword>
<keyword id="KW-0732">Signal</keyword>
<name>RNS10_MOUSE</name>